<dbReference type="PIR" id="S01804">
    <property type="entry name" value="HACOAG"/>
</dbReference>
<dbReference type="PDB" id="3WR1">
    <property type="method" value="X-ray"/>
    <property type="resolution" value="3.50 A"/>
    <property type="chains" value="A=1-141"/>
</dbReference>
<dbReference type="PDBsum" id="3WR1"/>
<dbReference type="SMR" id="P10780"/>
<dbReference type="EvolutionaryTrace" id="P10780"/>
<dbReference type="GO" id="GO:0072562">
    <property type="term" value="C:blood microparticle"/>
    <property type="evidence" value="ECO:0007669"/>
    <property type="project" value="TreeGrafter"/>
</dbReference>
<dbReference type="GO" id="GO:0031838">
    <property type="term" value="C:haptoglobin-hemoglobin complex"/>
    <property type="evidence" value="ECO:0007669"/>
    <property type="project" value="TreeGrafter"/>
</dbReference>
<dbReference type="GO" id="GO:0005833">
    <property type="term" value="C:hemoglobin complex"/>
    <property type="evidence" value="ECO:0007669"/>
    <property type="project" value="InterPro"/>
</dbReference>
<dbReference type="GO" id="GO:0031720">
    <property type="term" value="F:haptoglobin binding"/>
    <property type="evidence" value="ECO:0007669"/>
    <property type="project" value="TreeGrafter"/>
</dbReference>
<dbReference type="GO" id="GO:0020037">
    <property type="term" value="F:heme binding"/>
    <property type="evidence" value="ECO:0007669"/>
    <property type="project" value="InterPro"/>
</dbReference>
<dbReference type="GO" id="GO:0005506">
    <property type="term" value="F:iron ion binding"/>
    <property type="evidence" value="ECO:0007669"/>
    <property type="project" value="InterPro"/>
</dbReference>
<dbReference type="GO" id="GO:0043177">
    <property type="term" value="F:organic acid binding"/>
    <property type="evidence" value="ECO:0007669"/>
    <property type="project" value="TreeGrafter"/>
</dbReference>
<dbReference type="GO" id="GO:0019825">
    <property type="term" value="F:oxygen binding"/>
    <property type="evidence" value="ECO:0007669"/>
    <property type="project" value="InterPro"/>
</dbReference>
<dbReference type="GO" id="GO:0005344">
    <property type="term" value="F:oxygen carrier activity"/>
    <property type="evidence" value="ECO:0007669"/>
    <property type="project" value="UniProtKB-KW"/>
</dbReference>
<dbReference type="GO" id="GO:0004601">
    <property type="term" value="F:peroxidase activity"/>
    <property type="evidence" value="ECO:0007669"/>
    <property type="project" value="TreeGrafter"/>
</dbReference>
<dbReference type="GO" id="GO:0042744">
    <property type="term" value="P:hydrogen peroxide catabolic process"/>
    <property type="evidence" value="ECO:0007669"/>
    <property type="project" value="TreeGrafter"/>
</dbReference>
<dbReference type="CDD" id="cd08927">
    <property type="entry name" value="Hb-alpha-like"/>
    <property type="match status" value="1"/>
</dbReference>
<dbReference type="FunFam" id="1.10.490.10:FF:000002">
    <property type="entry name" value="Hemoglobin subunit alpha"/>
    <property type="match status" value="1"/>
</dbReference>
<dbReference type="Gene3D" id="1.10.490.10">
    <property type="entry name" value="Globins"/>
    <property type="match status" value="1"/>
</dbReference>
<dbReference type="InterPro" id="IPR000971">
    <property type="entry name" value="Globin"/>
</dbReference>
<dbReference type="InterPro" id="IPR009050">
    <property type="entry name" value="Globin-like_sf"/>
</dbReference>
<dbReference type="InterPro" id="IPR012292">
    <property type="entry name" value="Globin/Proto"/>
</dbReference>
<dbReference type="InterPro" id="IPR002338">
    <property type="entry name" value="Hemoglobin_a-typ"/>
</dbReference>
<dbReference type="InterPro" id="IPR050056">
    <property type="entry name" value="Hemoglobin_oxygen_transport"/>
</dbReference>
<dbReference type="InterPro" id="IPR002339">
    <property type="entry name" value="Hemoglobin_pi"/>
</dbReference>
<dbReference type="PANTHER" id="PTHR11442">
    <property type="entry name" value="HEMOGLOBIN FAMILY MEMBER"/>
    <property type="match status" value="1"/>
</dbReference>
<dbReference type="PANTHER" id="PTHR11442:SF48">
    <property type="entry name" value="HEMOGLOBIN SUBUNIT ALPHA"/>
    <property type="match status" value="1"/>
</dbReference>
<dbReference type="Pfam" id="PF00042">
    <property type="entry name" value="Globin"/>
    <property type="match status" value="1"/>
</dbReference>
<dbReference type="PRINTS" id="PR00612">
    <property type="entry name" value="ALPHAHAEM"/>
</dbReference>
<dbReference type="PRINTS" id="PR00815">
    <property type="entry name" value="PIHAEM"/>
</dbReference>
<dbReference type="SUPFAM" id="SSF46458">
    <property type="entry name" value="Globin-like"/>
    <property type="match status" value="1"/>
</dbReference>
<dbReference type="PROSITE" id="PS01033">
    <property type="entry name" value="GLOBIN"/>
    <property type="match status" value="1"/>
</dbReference>
<proteinExistence type="evidence at protein level"/>
<keyword id="KW-0002">3D-structure</keyword>
<keyword id="KW-0903">Direct protein sequencing</keyword>
<keyword id="KW-0349">Heme</keyword>
<keyword id="KW-0408">Iron</keyword>
<keyword id="KW-0479">Metal-binding</keyword>
<keyword id="KW-0561">Oxygen transport</keyword>
<keyword id="KW-0813">Transport</keyword>
<gene>
    <name type="primary">HBAA</name>
</gene>
<comment type="function">
    <text>Involved in oxygen transport from the lung to the various peripheral tissues.</text>
</comment>
<comment type="subunit">
    <text>Heterotetramer of two alpha chains and two beta chains.</text>
</comment>
<comment type="tissue specificity">
    <text>Red blood cells.</text>
</comment>
<comment type="similarity">
    <text evidence="1">Belongs to the globin family.</text>
</comment>
<organism>
    <name type="scientific">Phalacrocorax carbo</name>
    <name type="common">Great cormorant</name>
    <name type="synonym">Pelecanus carbo</name>
    <dbReference type="NCBI Taxonomy" id="9209"/>
    <lineage>
        <taxon>Eukaryota</taxon>
        <taxon>Metazoa</taxon>
        <taxon>Chordata</taxon>
        <taxon>Craniata</taxon>
        <taxon>Vertebrata</taxon>
        <taxon>Euteleostomi</taxon>
        <taxon>Archelosauria</taxon>
        <taxon>Archosauria</taxon>
        <taxon>Dinosauria</taxon>
        <taxon>Saurischia</taxon>
        <taxon>Theropoda</taxon>
        <taxon>Coelurosauria</taxon>
        <taxon>Aves</taxon>
        <taxon>Neognathae</taxon>
        <taxon>Neoaves</taxon>
        <taxon>Aequornithes</taxon>
        <taxon>Suliformes</taxon>
        <taxon>Phalacrocoracidae</taxon>
        <taxon>Phalacrocorax</taxon>
    </lineage>
</organism>
<reference key="1">
    <citation type="journal article" date="1988" name="Biol. Chem. Hoppe-Seyler">
        <title>The primary structure of the hemoglobin of the Cormorant (Phalacrocorax carbo, Pelecaniformes).</title>
        <authorList>
            <person name="Huber K."/>
            <person name="Braunitzer G."/>
            <person name="Schneeganss D."/>
            <person name="Kosters J."/>
            <person name="Grimm F."/>
        </authorList>
    </citation>
    <scope>PROTEIN SEQUENCE</scope>
</reference>
<protein>
    <recommendedName>
        <fullName>Hemoglobin subunit alpha-A</fullName>
    </recommendedName>
    <alternativeName>
        <fullName>Alpha-A-globin</fullName>
    </alternativeName>
    <alternativeName>
        <fullName>Hemoglobin alpha-A chain</fullName>
    </alternativeName>
</protein>
<accession>P10780</accession>
<evidence type="ECO:0000255" key="1">
    <source>
        <dbReference type="PROSITE-ProRule" id="PRU00238"/>
    </source>
</evidence>
<evidence type="ECO:0007829" key="2">
    <source>
        <dbReference type="PDB" id="3WR1"/>
    </source>
</evidence>
<sequence>VLSASDKTNVKGVFAKVGGSAEAYGAETLERMFTAYPQTKTYFPHFDLHHGSAQIKAHGKKVAAALVEAANHIDDIAGALSKLSDLHAQKLRVDPVNFKLLGHCFLVVVAIHHPTLLTPEVHASLDKFMCAVAKELTAKYR</sequence>
<name>HBA_PHACA</name>
<feature type="chain" id="PRO_0000052726" description="Hemoglobin subunit alpha-A">
    <location>
        <begin position="1"/>
        <end position="141"/>
    </location>
</feature>
<feature type="domain" description="Globin" evidence="1">
    <location>
        <begin position="1"/>
        <end position="141"/>
    </location>
</feature>
<feature type="binding site" evidence="1">
    <location>
        <position position="58"/>
    </location>
    <ligand>
        <name>O2</name>
        <dbReference type="ChEBI" id="CHEBI:15379"/>
    </ligand>
</feature>
<feature type="binding site" description="proximal binding residue" evidence="1">
    <location>
        <position position="87"/>
    </location>
    <ligand>
        <name>heme b</name>
        <dbReference type="ChEBI" id="CHEBI:60344"/>
    </ligand>
    <ligandPart>
        <name>Fe</name>
        <dbReference type="ChEBI" id="CHEBI:18248"/>
    </ligandPart>
</feature>
<feature type="helix" evidence="2">
    <location>
        <begin position="4"/>
        <end position="17"/>
    </location>
</feature>
<feature type="helix" evidence="2">
    <location>
        <begin position="18"/>
        <end position="20"/>
    </location>
</feature>
<feature type="helix" evidence="2">
    <location>
        <begin position="21"/>
        <end position="35"/>
    </location>
</feature>
<feature type="helix" evidence="2">
    <location>
        <begin position="37"/>
        <end position="42"/>
    </location>
</feature>
<feature type="helix" evidence="2">
    <location>
        <begin position="53"/>
        <end position="69"/>
    </location>
</feature>
<feature type="helix" evidence="2">
    <location>
        <begin position="73"/>
        <end position="75"/>
    </location>
</feature>
<feature type="helix" evidence="2">
    <location>
        <begin position="76"/>
        <end position="79"/>
    </location>
</feature>
<feature type="helix" evidence="2">
    <location>
        <begin position="81"/>
        <end position="89"/>
    </location>
</feature>
<feature type="helix" evidence="2">
    <location>
        <begin position="95"/>
        <end position="112"/>
    </location>
</feature>
<feature type="turn" evidence="2">
    <location>
        <begin position="114"/>
        <end position="116"/>
    </location>
</feature>
<feature type="helix" evidence="2">
    <location>
        <begin position="119"/>
        <end position="135"/>
    </location>
</feature>
<feature type="turn" evidence="2">
    <location>
        <begin position="136"/>
        <end position="140"/>
    </location>
</feature>